<feature type="chain" id="PRO_1000149064" description="Phosphoribosyl-AMP cyclohydrolase">
    <location>
        <begin position="1"/>
        <end position="101"/>
    </location>
</feature>
<feature type="binding site" evidence="1">
    <location>
        <position position="71"/>
    </location>
    <ligand>
        <name>Mg(2+)</name>
        <dbReference type="ChEBI" id="CHEBI:18420"/>
    </ligand>
</feature>
<feature type="binding site" evidence="1">
    <location>
        <position position="72"/>
    </location>
    <ligand>
        <name>Zn(2+)</name>
        <dbReference type="ChEBI" id="CHEBI:29105"/>
        <note>ligand shared between dimeric partners</note>
    </ligand>
</feature>
<feature type="binding site" evidence="1">
    <location>
        <position position="73"/>
    </location>
    <ligand>
        <name>Mg(2+)</name>
        <dbReference type="ChEBI" id="CHEBI:18420"/>
    </ligand>
</feature>
<feature type="binding site" evidence="1">
    <location>
        <position position="75"/>
    </location>
    <ligand>
        <name>Mg(2+)</name>
        <dbReference type="ChEBI" id="CHEBI:18420"/>
    </ligand>
</feature>
<feature type="binding site" evidence="1">
    <location>
        <position position="88"/>
    </location>
    <ligand>
        <name>Zn(2+)</name>
        <dbReference type="ChEBI" id="CHEBI:29105"/>
        <note>ligand shared between dimeric partners</note>
    </ligand>
</feature>
<feature type="binding site" evidence="1">
    <location>
        <position position="95"/>
    </location>
    <ligand>
        <name>Zn(2+)</name>
        <dbReference type="ChEBI" id="CHEBI:29105"/>
        <note>ligand shared between dimeric partners</note>
    </ligand>
</feature>
<evidence type="ECO:0000255" key="1">
    <source>
        <dbReference type="HAMAP-Rule" id="MF_01021"/>
    </source>
</evidence>
<keyword id="KW-0028">Amino-acid biosynthesis</keyword>
<keyword id="KW-0963">Cytoplasm</keyword>
<keyword id="KW-0368">Histidine biosynthesis</keyword>
<keyword id="KW-0378">Hydrolase</keyword>
<keyword id="KW-0460">Magnesium</keyword>
<keyword id="KW-0479">Metal-binding</keyword>
<keyword id="KW-0862">Zinc</keyword>
<protein>
    <recommendedName>
        <fullName evidence="1">Phosphoribosyl-AMP cyclohydrolase</fullName>
        <shortName evidence="1">PRA-CH</shortName>
        <ecNumber evidence="1">3.5.4.19</ecNumber>
    </recommendedName>
</protein>
<organism>
    <name type="scientific">Bacillus cereus (strain Q1)</name>
    <dbReference type="NCBI Taxonomy" id="361100"/>
    <lineage>
        <taxon>Bacteria</taxon>
        <taxon>Bacillati</taxon>
        <taxon>Bacillota</taxon>
        <taxon>Bacilli</taxon>
        <taxon>Bacillales</taxon>
        <taxon>Bacillaceae</taxon>
        <taxon>Bacillus</taxon>
        <taxon>Bacillus cereus group</taxon>
    </lineage>
</organism>
<name>HIS3_BACCQ</name>
<sequence length="101" mass="11585">MKPNFSKGLLPAVVIEEGTKEVLMLAYMNEEAYEKTLETKRTWFYSRSRRSLWNKGETSGNVQHVQSLYLDCDQDAIVVVVKQVGPACHTGEKTCFHYKII</sequence>
<accession>B9IV01</accession>
<reference key="1">
    <citation type="journal article" date="2009" name="J. Bacteriol.">
        <title>Complete genome sequence of the extremophilic Bacillus cereus strain Q1 with industrial applications.</title>
        <authorList>
            <person name="Xiong Z."/>
            <person name="Jiang Y."/>
            <person name="Qi D."/>
            <person name="Lu H."/>
            <person name="Yang F."/>
            <person name="Yang J."/>
            <person name="Chen L."/>
            <person name="Sun L."/>
            <person name="Xu X."/>
            <person name="Xue Y."/>
            <person name="Zhu Y."/>
            <person name="Jin Q."/>
        </authorList>
    </citation>
    <scope>NUCLEOTIDE SEQUENCE [LARGE SCALE GENOMIC DNA]</scope>
    <source>
        <strain>Q1</strain>
    </source>
</reference>
<proteinExistence type="inferred from homology"/>
<comment type="function">
    <text evidence="1">Catalyzes the hydrolysis of the adenine ring of phosphoribosyl-AMP.</text>
</comment>
<comment type="catalytic activity">
    <reaction evidence="1">
        <text>1-(5-phospho-beta-D-ribosyl)-5'-AMP + H2O = 1-(5-phospho-beta-D-ribosyl)-5-[(5-phospho-beta-D-ribosylamino)methylideneamino]imidazole-4-carboxamide</text>
        <dbReference type="Rhea" id="RHEA:20049"/>
        <dbReference type="ChEBI" id="CHEBI:15377"/>
        <dbReference type="ChEBI" id="CHEBI:58435"/>
        <dbReference type="ChEBI" id="CHEBI:59457"/>
        <dbReference type="EC" id="3.5.4.19"/>
    </reaction>
</comment>
<comment type="cofactor">
    <cofactor evidence="1">
        <name>Mg(2+)</name>
        <dbReference type="ChEBI" id="CHEBI:18420"/>
    </cofactor>
    <text evidence="1">Binds 1 Mg(2+) ion per subunit.</text>
</comment>
<comment type="cofactor">
    <cofactor evidence="1">
        <name>Zn(2+)</name>
        <dbReference type="ChEBI" id="CHEBI:29105"/>
    </cofactor>
    <text evidence="1">Binds 1 zinc ion per subunit.</text>
</comment>
<comment type="pathway">
    <text evidence="1">Amino-acid biosynthesis; L-histidine biosynthesis; L-histidine from 5-phospho-alpha-D-ribose 1-diphosphate: step 3/9.</text>
</comment>
<comment type="subunit">
    <text evidence="1">Homodimer.</text>
</comment>
<comment type="subcellular location">
    <subcellularLocation>
        <location evidence="1">Cytoplasm</location>
    </subcellularLocation>
</comment>
<comment type="similarity">
    <text evidence="1">Belongs to the PRA-CH family.</text>
</comment>
<gene>
    <name evidence="1" type="primary">hisI</name>
    <name type="ordered locus">BCQ_1484</name>
</gene>
<dbReference type="EC" id="3.5.4.19" evidence="1"/>
<dbReference type="EMBL" id="CP000227">
    <property type="protein sequence ID" value="ACM11912.1"/>
    <property type="molecule type" value="Genomic_DNA"/>
</dbReference>
<dbReference type="SMR" id="B9IV01"/>
<dbReference type="KEGG" id="bcq:BCQ_1484"/>
<dbReference type="HOGENOM" id="CLU_048577_5_3_9"/>
<dbReference type="UniPathway" id="UPA00031">
    <property type="reaction ID" value="UER00008"/>
</dbReference>
<dbReference type="Proteomes" id="UP000000441">
    <property type="component" value="Chromosome"/>
</dbReference>
<dbReference type="GO" id="GO:0005737">
    <property type="term" value="C:cytoplasm"/>
    <property type="evidence" value="ECO:0007669"/>
    <property type="project" value="UniProtKB-SubCell"/>
</dbReference>
<dbReference type="GO" id="GO:0000287">
    <property type="term" value="F:magnesium ion binding"/>
    <property type="evidence" value="ECO:0007669"/>
    <property type="project" value="UniProtKB-UniRule"/>
</dbReference>
<dbReference type="GO" id="GO:0004635">
    <property type="term" value="F:phosphoribosyl-AMP cyclohydrolase activity"/>
    <property type="evidence" value="ECO:0007669"/>
    <property type="project" value="UniProtKB-UniRule"/>
</dbReference>
<dbReference type="GO" id="GO:0008270">
    <property type="term" value="F:zinc ion binding"/>
    <property type="evidence" value="ECO:0007669"/>
    <property type="project" value="UniProtKB-UniRule"/>
</dbReference>
<dbReference type="GO" id="GO:0000105">
    <property type="term" value="P:L-histidine biosynthetic process"/>
    <property type="evidence" value="ECO:0007669"/>
    <property type="project" value="UniProtKB-UniRule"/>
</dbReference>
<dbReference type="FunFam" id="3.10.20.810:FF:000001">
    <property type="entry name" value="Histidine biosynthesis bifunctional protein HisIE"/>
    <property type="match status" value="1"/>
</dbReference>
<dbReference type="Gene3D" id="3.10.20.810">
    <property type="entry name" value="Phosphoribosyl-AMP cyclohydrolase"/>
    <property type="match status" value="1"/>
</dbReference>
<dbReference type="HAMAP" id="MF_01021">
    <property type="entry name" value="HisI"/>
    <property type="match status" value="1"/>
</dbReference>
<dbReference type="InterPro" id="IPR026660">
    <property type="entry name" value="PRA-CH"/>
</dbReference>
<dbReference type="InterPro" id="IPR002496">
    <property type="entry name" value="PRib_AMP_CycHydrolase_dom"/>
</dbReference>
<dbReference type="InterPro" id="IPR038019">
    <property type="entry name" value="PRib_AMP_CycHydrolase_sf"/>
</dbReference>
<dbReference type="NCBIfam" id="NF000768">
    <property type="entry name" value="PRK00051.1"/>
    <property type="match status" value="1"/>
</dbReference>
<dbReference type="PANTHER" id="PTHR42945">
    <property type="entry name" value="HISTIDINE BIOSYNTHESIS BIFUNCTIONAL PROTEIN"/>
    <property type="match status" value="1"/>
</dbReference>
<dbReference type="PANTHER" id="PTHR42945:SF9">
    <property type="entry name" value="HISTIDINE BIOSYNTHESIS BIFUNCTIONAL PROTEIN HISIE"/>
    <property type="match status" value="1"/>
</dbReference>
<dbReference type="Pfam" id="PF01502">
    <property type="entry name" value="PRA-CH"/>
    <property type="match status" value="1"/>
</dbReference>
<dbReference type="SUPFAM" id="SSF141734">
    <property type="entry name" value="HisI-like"/>
    <property type="match status" value="1"/>
</dbReference>